<reference key="1">
    <citation type="journal article" date="2007" name="PLoS ONE">
        <title>A glimpse of streptococcal toxic shock syndrome from comparative genomics of S. suis 2 Chinese isolates.</title>
        <authorList>
            <person name="Chen C."/>
            <person name="Tang J."/>
            <person name="Dong W."/>
            <person name="Wang C."/>
            <person name="Feng Y."/>
            <person name="Wang J."/>
            <person name="Zheng F."/>
            <person name="Pan X."/>
            <person name="Liu D."/>
            <person name="Li M."/>
            <person name="Song Y."/>
            <person name="Zhu X."/>
            <person name="Sun H."/>
            <person name="Feng T."/>
            <person name="Guo Z."/>
            <person name="Ju A."/>
            <person name="Ge J."/>
            <person name="Dong Y."/>
            <person name="Sun W."/>
            <person name="Jiang Y."/>
            <person name="Wang J."/>
            <person name="Yan J."/>
            <person name="Yang H."/>
            <person name="Wang X."/>
            <person name="Gao G.F."/>
            <person name="Yang R."/>
            <person name="Wang J."/>
            <person name="Yu J."/>
        </authorList>
    </citation>
    <scope>NUCLEOTIDE SEQUENCE [LARGE SCALE GENOMIC DNA]</scope>
    <source>
        <strain>05ZYH33</strain>
    </source>
</reference>
<gene>
    <name evidence="1" type="primary">argG</name>
    <name type="ordered locus">SSU05_2017</name>
</gene>
<sequence>MTKEKLILAYSGGLDTSVAIAWLKKDYDVIAVCMDVGEGKNLEFIHDKALSIGAIESHVLDVKEEFAQEYVLPALQAHAYYEQKYPLVSALSRPLISKKLVEMAHKTGATTIAHGCTGKGNDQVRFEVAIAALDPSLKVVAPVREWKWAREEEIIFAKENGVPVPADLDSPYSVDQNLWGRANECGVLENPWNEAPEDTFGITTSPENAPDTPEYVDIEFKAGIPVAVNGEKLSLANLIQRLNVIAGKHGVGRIDHVENRLVGIKSREIYECPGAITLLTAHKEIEDLTLVREVSHFKPIVSNELSNLIYNGLWFNPATDALKAYLAQTQAVVNGTAKVKLYKGSAKVVARKSPNSLYDEDLATYTSADTFDQDAAVGFIKLWGLPTKVNAEIHKKS</sequence>
<proteinExistence type="inferred from homology"/>
<keyword id="KW-0028">Amino-acid biosynthesis</keyword>
<keyword id="KW-0055">Arginine biosynthesis</keyword>
<keyword id="KW-0067">ATP-binding</keyword>
<keyword id="KW-0963">Cytoplasm</keyword>
<keyword id="KW-0436">Ligase</keyword>
<keyword id="KW-0547">Nucleotide-binding</keyword>
<name>ASSY_STRSY</name>
<dbReference type="EC" id="6.3.4.5" evidence="1"/>
<dbReference type="EMBL" id="CP000407">
    <property type="protein sequence ID" value="ABP90983.1"/>
    <property type="status" value="ALT_INIT"/>
    <property type="molecule type" value="Genomic_DNA"/>
</dbReference>
<dbReference type="SMR" id="A4VXZ4"/>
<dbReference type="STRING" id="391295.SSU05_2017"/>
<dbReference type="KEGG" id="ssu:SSU05_2017"/>
<dbReference type="eggNOG" id="COG0137">
    <property type="taxonomic scope" value="Bacteria"/>
</dbReference>
<dbReference type="HOGENOM" id="CLU_032784_4_2_9"/>
<dbReference type="UniPathway" id="UPA00068">
    <property type="reaction ID" value="UER00113"/>
</dbReference>
<dbReference type="GO" id="GO:0005737">
    <property type="term" value="C:cytoplasm"/>
    <property type="evidence" value="ECO:0007669"/>
    <property type="project" value="UniProtKB-SubCell"/>
</dbReference>
<dbReference type="GO" id="GO:0004055">
    <property type="term" value="F:argininosuccinate synthase activity"/>
    <property type="evidence" value="ECO:0007669"/>
    <property type="project" value="UniProtKB-UniRule"/>
</dbReference>
<dbReference type="GO" id="GO:0005524">
    <property type="term" value="F:ATP binding"/>
    <property type="evidence" value="ECO:0007669"/>
    <property type="project" value="UniProtKB-UniRule"/>
</dbReference>
<dbReference type="GO" id="GO:0000053">
    <property type="term" value="P:argininosuccinate metabolic process"/>
    <property type="evidence" value="ECO:0007669"/>
    <property type="project" value="TreeGrafter"/>
</dbReference>
<dbReference type="GO" id="GO:0006526">
    <property type="term" value="P:L-arginine biosynthetic process"/>
    <property type="evidence" value="ECO:0007669"/>
    <property type="project" value="UniProtKB-UniRule"/>
</dbReference>
<dbReference type="GO" id="GO:0000050">
    <property type="term" value="P:urea cycle"/>
    <property type="evidence" value="ECO:0007669"/>
    <property type="project" value="TreeGrafter"/>
</dbReference>
<dbReference type="CDD" id="cd01999">
    <property type="entry name" value="ASS"/>
    <property type="match status" value="1"/>
</dbReference>
<dbReference type="FunFam" id="1.20.5.470:FF:000002">
    <property type="entry name" value="Argininosuccinate synthase"/>
    <property type="match status" value="1"/>
</dbReference>
<dbReference type="FunFam" id="3.40.50.620:FF:000038">
    <property type="entry name" value="Argininosuccinate synthase"/>
    <property type="match status" value="1"/>
</dbReference>
<dbReference type="FunFam" id="3.90.1260.10:FF:000007">
    <property type="entry name" value="Argininosuccinate synthase"/>
    <property type="match status" value="1"/>
</dbReference>
<dbReference type="Gene3D" id="3.90.1260.10">
    <property type="entry name" value="Argininosuccinate synthetase, chain A, domain 2"/>
    <property type="match status" value="1"/>
</dbReference>
<dbReference type="Gene3D" id="3.40.50.620">
    <property type="entry name" value="HUPs"/>
    <property type="match status" value="1"/>
</dbReference>
<dbReference type="Gene3D" id="1.20.5.470">
    <property type="entry name" value="Single helix bin"/>
    <property type="match status" value="1"/>
</dbReference>
<dbReference type="HAMAP" id="MF_00005">
    <property type="entry name" value="Arg_succ_synth_type1"/>
    <property type="match status" value="1"/>
</dbReference>
<dbReference type="InterPro" id="IPR048268">
    <property type="entry name" value="Arginosuc_syn_C"/>
</dbReference>
<dbReference type="InterPro" id="IPR048267">
    <property type="entry name" value="Arginosuc_syn_N"/>
</dbReference>
<dbReference type="InterPro" id="IPR001518">
    <property type="entry name" value="Arginosuc_synth"/>
</dbReference>
<dbReference type="InterPro" id="IPR018223">
    <property type="entry name" value="Arginosuc_synth_CS"/>
</dbReference>
<dbReference type="InterPro" id="IPR023434">
    <property type="entry name" value="Arginosuc_synth_type_1_subfam"/>
</dbReference>
<dbReference type="InterPro" id="IPR024074">
    <property type="entry name" value="AS_cat/multimer_dom_body"/>
</dbReference>
<dbReference type="InterPro" id="IPR014729">
    <property type="entry name" value="Rossmann-like_a/b/a_fold"/>
</dbReference>
<dbReference type="NCBIfam" id="TIGR00032">
    <property type="entry name" value="argG"/>
    <property type="match status" value="1"/>
</dbReference>
<dbReference type="NCBIfam" id="NF001770">
    <property type="entry name" value="PRK00509.1"/>
    <property type="match status" value="1"/>
</dbReference>
<dbReference type="PANTHER" id="PTHR11587">
    <property type="entry name" value="ARGININOSUCCINATE SYNTHASE"/>
    <property type="match status" value="1"/>
</dbReference>
<dbReference type="PANTHER" id="PTHR11587:SF2">
    <property type="entry name" value="ARGININOSUCCINATE SYNTHASE"/>
    <property type="match status" value="1"/>
</dbReference>
<dbReference type="Pfam" id="PF20979">
    <property type="entry name" value="Arginosuc_syn_C"/>
    <property type="match status" value="1"/>
</dbReference>
<dbReference type="Pfam" id="PF00764">
    <property type="entry name" value="Arginosuc_synth"/>
    <property type="match status" value="1"/>
</dbReference>
<dbReference type="SUPFAM" id="SSF52402">
    <property type="entry name" value="Adenine nucleotide alpha hydrolases-like"/>
    <property type="match status" value="1"/>
</dbReference>
<dbReference type="SUPFAM" id="SSF69864">
    <property type="entry name" value="Argininosuccinate synthetase, C-terminal domain"/>
    <property type="match status" value="1"/>
</dbReference>
<dbReference type="PROSITE" id="PS00564">
    <property type="entry name" value="ARGININOSUCCIN_SYN_1"/>
    <property type="match status" value="1"/>
</dbReference>
<dbReference type="PROSITE" id="PS00565">
    <property type="entry name" value="ARGININOSUCCIN_SYN_2"/>
    <property type="match status" value="1"/>
</dbReference>
<evidence type="ECO:0000255" key="1">
    <source>
        <dbReference type="HAMAP-Rule" id="MF_00005"/>
    </source>
</evidence>
<evidence type="ECO:0000305" key="2"/>
<comment type="catalytic activity">
    <reaction evidence="1">
        <text>L-citrulline + L-aspartate + ATP = 2-(N(omega)-L-arginino)succinate + AMP + diphosphate + H(+)</text>
        <dbReference type="Rhea" id="RHEA:10932"/>
        <dbReference type="ChEBI" id="CHEBI:15378"/>
        <dbReference type="ChEBI" id="CHEBI:29991"/>
        <dbReference type="ChEBI" id="CHEBI:30616"/>
        <dbReference type="ChEBI" id="CHEBI:33019"/>
        <dbReference type="ChEBI" id="CHEBI:57472"/>
        <dbReference type="ChEBI" id="CHEBI:57743"/>
        <dbReference type="ChEBI" id="CHEBI:456215"/>
        <dbReference type="EC" id="6.3.4.5"/>
    </reaction>
</comment>
<comment type="pathway">
    <text evidence="1">Amino-acid biosynthesis; L-arginine biosynthesis; L-arginine from L-ornithine and carbamoyl phosphate: step 2/3.</text>
</comment>
<comment type="subunit">
    <text evidence="1">Homotetramer.</text>
</comment>
<comment type="subcellular location">
    <subcellularLocation>
        <location evidence="1">Cytoplasm</location>
    </subcellularLocation>
</comment>
<comment type="similarity">
    <text evidence="1">Belongs to the argininosuccinate synthase family. Type 1 subfamily.</text>
</comment>
<comment type="sequence caution" evidence="2">
    <conflict type="erroneous initiation">
        <sequence resource="EMBL-CDS" id="ABP90983"/>
    </conflict>
</comment>
<organism>
    <name type="scientific">Streptococcus suis (strain 05ZYH33)</name>
    <dbReference type="NCBI Taxonomy" id="391295"/>
    <lineage>
        <taxon>Bacteria</taxon>
        <taxon>Bacillati</taxon>
        <taxon>Bacillota</taxon>
        <taxon>Bacilli</taxon>
        <taxon>Lactobacillales</taxon>
        <taxon>Streptococcaceae</taxon>
        <taxon>Streptococcus</taxon>
    </lineage>
</organism>
<feature type="chain" id="PRO_0000321319" description="Argininosuccinate synthase">
    <location>
        <begin position="1"/>
        <end position="397"/>
    </location>
</feature>
<feature type="binding site" evidence="1">
    <location>
        <begin position="9"/>
        <end position="17"/>
    </location>
    <ligand>
        <name>ATP</name>
        <dbReference type="ChEBI" id="CHEBI:30616"/>
    </ligand>
</feature>
<feature type="binding site" evidence="1">
    <location>
        <position position="85"/>
    </location>
    <ligand>
        <name>L-citrulline</name>
        <dbReference type="ChEBI" id="CHEBI:57743"/>
    </ligand>
</feature>
<feature type="binding site" evidence="1">
    <location>
        <position position="115"/>
    </location>
    <ligand>
        <name>ATP</name>
        <dbReference type="ChEBI" id="CHEBI:30616"/>
    </ligand>
</feature>
<feature type="binding site" evidence="1">
    <location>
        <position position="117"/>
    </location>
    <ligand>
        <name>L-aspartate</name>
        <dbReference type="ChEBI" id="CHEBI:29991"/>
    </ligand>
</feature>
<feature type="binding site" evidence="1">
    <location>
        <position position="121"/>
    </location>
    <ligand>
        <name>L-aspartate</name>
        <dbReference type="ChEBI" id="CHEBI:29991"/>
    </ligand>
</feature>
<feature type="binding site" evidence="1">
    <location>
        <position position="121"/>
    </location>
    <ligand>
        <name>L-citrulline</name>
        <dbReference type="ChEBI" id="CHEBI:57743"/>
    </ligand>
</feature>
<feature type="binding site" evidence="1">
    <location>
        <position position="122"/>
    </location>
    <ligand>
        <name>L-aspartate</name>
        <dbReference type="ChEBI" id="CHEBI:29991"/>
    </ligand>
</feature>
<feature type="binding site" evidence="1">
    <location>
        <position position="125"/>
    </location>
    <ligand>
        <name>L-citrulline</name>
        <dbReference type="ChEBI" id="CHEBI:57743"/>
    </ligand>
</feature>
<feature type="binding site" evidence="1">
    <location>
        <position position="173"/>
    </location>
    <ligand>
        <name>L-citrulline</name>
        <dbReference type="ChEBI" id="CHEBI:57743"/>
    </ligand>
</feature>
<feature type="binding site" evidence="1">
    <location>
        <position position="258"/>
    </location>
    <ligand>
        <name>L-citrulline</name>
        <dbReference type="ChEBI" id="CHEBI:57743"/>
    </ligand>
</feature>
<feature type="binding site" evidence="1">
    <location>
        <position position="270"/>
    </location>
    <ligand>
        <name>L-citrulline</name>
        <dbReference type="ChEBI" id="CHEBI:57743"/>
    </ligand>
</feature>
<accession>A4VXZ4</accession>
<protein>
    <recommendedName>
        <fullName evidence="1">Argininosuccinate synthase</fullName>
        <ecNumber evidence="1">6.3.4.5</ecNumber>
    </recommendedName>
    <alternativeName>
        <fullName evidence="1">Citrulline--aspartate ligase</fullName>
    </alternativeName>
</protein>